<organism>
    <name type="scientific">Mycobacterium bovis (strain BCG / Pasteur 1173P2)</name>
    <dbReference type="NCBI Taxonomy" id="410289"/>
    <lineage>
        <taxon>Bacteria</taxon>
        <taxon>Bacillati</taxon>
        <taxon>Actinomycetota</taxon>
        <taxon>Actinomycetes</taxon>
        <taxon>Mycobacteriales</taxon>
        <taxon>Mycobacteriaceae</taxon>
        <taxon>Mycobacterium</taxon>
        <taxon>Mycobacterium tuberculosis complex</taxon>
    </lineage>
</organism>
<evidence type="ECO:0000255" key="1">
    <source>
        <dbReference type="HAMAP-Rule" id="MF_00508"/>
    </source>
</evidence>
<evidence type="ECO:0000305" key="2"/>
<gene>
    <name evidence="1" type="primary">rpsJ</name>
    <name type="ordered locus">BCG_0750</name>
</gene>
<accession>A1KGI1</accession>
<dbReference type="EMBL" id="AM408590">
    <property type="protein sequence ID" value="CAL70736.1"/>
    <property type="molecule type" value="Genomic_DNA"/>
</dbReference>
<dbReference type="RefSeq" id="WP_003403578.1">
    <property type="nucleotide sequence ID" value="NC_008769.1"/>
</dbReference>
<dbReference type="SMR" id="A1KGI1"/>
<dbReference type="GeneID" id="93438601"/>
<dbReference type="KEGG" id="mbb:BCG_0750"/>
<dbReference type="HOGENOM" id="CLU_122625_1_3_11"/>
<dbReference type="Proteomes" id="UP000001472">
    <property type="component" value="Chromosome"/>
</dbReference>
<dbReference type="GO" id="GO:1990904">
    <property type="term" value="C:ribonucleoprotein complex"/>
    <property type="evidence" value="ECO:0007669"/>
    <property type="project" value="UniProtKB-KW"/>
</dbReference>
<dbReference type="GO" id="GO:0005840">
    <property type="term" value="C:ribosome"/>
    <property type="evidence" value="ECO:0007669"/>
    <property type="project" value="UniProtKB-KW"/>
</dbReference>
<dbReference type="GO" id="GO:0003735">
    <property type="term" value="F:structural constituent of ribosome"/>
    <property type="evidence" value="ECO:0007669"/>
    <property type="project" value="InterPro"/>
</dbReference>
<dbReference type="GO" id="GO:0000049">
    <property type="term" value="F:tRNA binding"/>
    <property type="evidence" value="ECO:0007669"/>
    <property type="project" value="UniProtKB-UniRule"/>
</dbReference>
<dbReference type="GO" id="GO:0006412">
    <property type="term" value="P:translation"/>
    <property type="evidence" value="ECO:0007669"/>
    <property type="project" value="UniProtKB-UniRule"/>
</dbReference>
<dbReference type="FunFam" id="3.30.70.600:FF:000001">
    <property type="entry name" value="30S ribosomal protein S10"/>
    <property type="match status" value="1"/>
</dbReference>
<dbReference type="Gene3D" id="3.30.70.600">
    <property type="entry name" value="Ribosomal protein S10 domain"/>
    <property type="match status" value="1"/>
</dbReference>
<dbReference type="HAMAP" id="MF_00508">
    <property type="entry name" value="Ribosomal_uS10"/>
    <property type="match status" value="1"/>
</dbReference>
<dbReference type="InterPro" id="IPR001848">
    <property type="entry name" value="Ribosomal_uS10"/>
</dbReference>
<dbReference type="InterPro" id="IPR018268">
    <property type="entry name" value="Ribosomal_uS10_CS"/>
</dbReference>
<dbReference type="InterPro" id="IPR027486">
    <property type="entry name" value="Ribosomal_uS10_dom"/>
</dbReference>
<dbReference type="InterPro" id="IPR036838">
    <property type="entry name" value="Ribosomal_uS10_dom_sf"/>
</dbReference>
<dbReference type="NCBIfam" id="NF001861">
    <property type="entry name" value="PRK00596.1"/>
    <property type="match status" value="1"/>
</dbReference>
<dbReference type="NCBIfam" id="TIGR01049">
    <property type="entry name" value="rpsJ_bact"/>
    <property type="match status" value="1"/>
</dbReference>
<dbReference type="PANTHER" id="PTHR11700">
    <property type="entry name" value="30S RIBOSOMAL PROTEIN S10 FAMILY MEMBER"/>
    <property type="match status" value="1"/>
</dbReference>
<dbReference type="Pfam" id="PF00338">
    <property type="entry name" value="Ribosomal_S10"/>
    <property type="match status" value="1"/>
</dbReference>
<dbReference type="PRINTS" id="PR00971">
    <property type="entry name" value="RIBOSOMALS10"/>
</dbReference>
<dbReference type="SMART" id="SM01403">
    <property type="entry name" value="Ribosomal_S10"/>
    <property type="match status" value="1"/>
</dbReference>
<dbReference type="SUPFAM" id="SSF54999">
    <property type="entry name" value="Ribosomal protein S10"/>
    <property type="match status" value="1"/>
</dbReference>
<dbReference type="PROSITE" id="PS00361">
    <property type="entry name" value="RIBOSOMAL_S10"/>
    <property type="match status" value="1"/>
</dbReference>
<sequence>MAGQKIRIRLKAYDHEAIDASARKIVETVVRTGASVVGPVPLPTEKNVYCVIRSPHKYKDSREHFEMRTHKRLIDIIDPTPKTVDALMRIDLPASVDVNIQ</sequence>
<keyword id="KW-0687">Ribonucleoprotein</keyword>
<keyword id="KW-0689">Ribosomal protein</keyword>
<protein>
    <recommendedName>
        <fullName evidence="1">Small ribosomal subunit protein uS10</fullName>
    </recommendedName>
    <alternativeName>
        <fullName evidence="2">30S ribosomal protein S10</fullName>
    </alternativeName>
</protein>
<reference key="1">
    <citation type="journal article" date="2007" name="Proc. Natl. Acad. Sci. U.S.A.">
        <title>Genome plasticity of BCG and impact on vaccine efficacy.</title>
        <authorList>
            <person name="Brosch R."/>
            <person name="Gordon S.V."/>
            <person name="Garnier T."/>
            <person name="Eiglmeier K."/>
            <person name="Frigui W."/>
            <person name="Valenti P."/>
            <person name="Dos Santos S."/>
            <person name="Duthoy S."/>
            <person name="Lacroix C."/>
            <person name="Garcia-Pelayo C."/>
            <person name="Inwald J.K."/>
            <person name="Golby P."/>
            <person name="Garcia J.N."/>
            <person name="Hewinson R.G."/>
            <person name="Behr M.A."/>
            <person name="Quail M.A."/>
            <person name="Churcher C."/>
            <person name="Barrell B.G."/>
            <person name="Parkhill J."/>
            <person name="Cole S.T."/>
        </authorList>
    </citation>
    <scope>NUCLEOTIDE SEQUENCE [LARGE SCALE GENOMIC DNA]</scope>
    <source>
        <strain>BCG / Pasteur 1173P2</strain>
    </source>
</reference>
<name>RS10_MYCBP</name>
<proteinExistence type="inferred from homology"/>
<comment type="function">
    <text evidence="1">Involved in the binding of tRNA to the ribosomes.</text>
</comment>
<comment type="subunit">
    <text evidence="1">Part of the 30S ribosomal subunit.</text>
</comment>
<comment type="similarity">
    <text evidence="1">Belongs to the universal ribosomal protein uS10 family.</text>
</comment>
<feature type="chain" id="PRO_1000015059" description="Small ribosomal subunit protein uS10">
    <location>
        <begin position="1"/>
        <end position="101"/>
    </location>
</feature>